<organism>
    <name type="scientific">Cyanothece sp. (strain PCC 7425 / ATCC 29141)</name>
    <dbReference type="NCBI Taxonomy" id="395961"/>
    <lineage>
        <taxon>Bacteria</taxon>
        <taxon>Bacillati</taxon>
        <taxon>Cyanobacteriota</taxon>
        <taxon>Cyanophyceae</taxon>
        <taxon>Gomontiellales</taxon>
        <taxon>Cyanothecaceae</taxon>
        <taxon>Cyanothece</taxon>
    </lineage>
</organism>
<dbReference type="EC" id="1.17.7.4" evidence="1"/>
<dbReference type="EMBL" id="CP001344">
    <property type="protein sequence ID" value="ACL44712.1"/>
    <property type="molecule type" value="Genomic_DNA"/>
</dbReference>
<dbReference type="SMR" id="B8HWD3"/>
<dbReference type="STRING" id="395961.Cyan7425_2354"/>
<dbReference type="KEGG" id="cyn:Cyan7425_2354"/>
<dbReference type="eggNOG" id="COG0761">
    <property type="taxonomic scope" value="Bacteria"/>
</dbReference>
<dbReference type="HOGENOM" id="CLU_027486_4_0_3"/>
<dbReference type="OrthoDB" id="9804077at2"/>
<dbReference type="UniPathway" id="UPA00056">
    <property type="reaction ID" value="UER00097"/>
</dbReference>
<dbReference type="UniPathway" id="UPA00059">
    <property type="reaction ID" value="UER00105"/>
</dbReference>
<dbReference type="GO" id="GO:0051539">
    <property type="term" value="F:4 iron, 4 sulfur cluster binding"/>
    <property type="evidence" value="ECO:0007669"/>
    <property type="project" value="UniProtKB-UniRule"/>
</dbReference>
<dbReference type="GO" id="GO:0051745">
    <property type="term" value="F:4-hydroxy-3-methylbut-2-enyl diphosphate reductase activity"/>
    <property type="evidence" value="ECO:0007669"/>
    <property type="project" value="UniProtKB-UniRule"/>
</dbReference>
<dbReference type="GO" id="GO:0046872">
    <property type="term" value="F:metal ion binding"/>
    <property type="evidence" value="ECO:0007669"/>
    <property type="project" value="UniProtKB-KW"/>
</dbReference>
<dbReference type="GO" id="GO:0050992">
    <property type="term" value="P:dimethylallyl diphosphate biosynthetic process"/>
    <property type="evidence" value="ECO:0007669"/>
    <property type="project" value="UniProtKB-UniRule"/>
</dbReference>
<dbReference type="GO" id="GO:0019288">
    <property type="term" value="P:isopentenyl diphosphate biosynthetic process, methylerythritol 4-phosphate pathway"/>
    <property type="evidence" value="ECO:0007669"/>
    <property type="project" value="UniProtKB-UniRule"/>
</dbReference>
<dbReference type="GO" id="GO:0016114">
    <property type="term" value="P:terpenoid biosynthetic process"/>
    <property type="evidence" value="ECO:0007669"/>
    <property type="project" value="UniProtKB-UniRule"/>
</dbReference>
<dbReference type="CDD" id="cd13944">
    <property type="entry name" value="lytB_ispH"/>
    <property type="match status" value="1"/>
</dbReference>
<dbReference type="Gene3D" id="3.40.50.11270">
    <property type="match status" value="1"/>
</dbReference>
<dbReference type="Gene3D" id="3.40.1010.20">
    <property type="entry name" value="4-hydroxy-3-methylbut-2-enyl diphosphate reductase, catalytic domain"/>
    <property type="match status" value="2"/>
</dbReference>
<dbReference type="HAMAP" id="MF_00191">
    <property type="entry name" value="IspH"/>
    <property type="match status" value="1"/>
</dbReference>
<dbReference type="InterPro" id="IPR003451">
    <property type="entry name" value="LytB/IspH"/>
</dbReference>
<dbReference type="NCBIfam" id="TIGR00216">
    <property type="entry name" value="ispH_lytB"/>
    <property type="match status" value="1"/>
</dbReference>
<dbReference type="NCBIfam" id="NF009911">
    <property type="entry name" value="PRK13371.1"/>
    <property type="match status" value="1"/>
</dbReference>
<dbReference type="PANTHER" id="PTHR31619">
    <property type="entry name" value="4-HYDROXY-3-METHYLBUT-2-ENYL DIPHOSPHATE REDUCTASE, CHLOROPLASTIC"/>
    <property type="match status" value="1"/>
</dbReference>
<dbReference type="PANTHER" id="PTHR31619:SF5">
    <property type="entry name" value="4-HYDROXY-3-METHYLBUT-2-ENYL DIPHOSPHATE REDUCTASE, CHLOROPLASTIC"/>
    <property type="match status" value="1"/>
</dbReference>
<dbReference type="Pfam" id="PF02401">
    <property type="entry name" value="LYTB"/>
    <property type="match status" value="1"/>
</dbReference>
<protein>
    <recommendedName>
        <fullName evidence="1">4-hydroxy-3-methylbut-2-enyl diphosphate reductase</fullName>
        <shortName evidence="1">HMBPP reductase</shortName>
        <ecNumber evidence="1">1.17.7.4</ecNumber>
    </recommendedName>
</protein>
<comment type="function">
    <text evidence="1">Catalyzes the conversion of 1-hydroxy-2-methyl-2-(E)-butenyl 4-diphosphate (HMBPP) into a mixture of isopentenyl diphosphate (IPP) and dimethylallyl diphosphate (DMAPP). Acts in the terminal step of the DOXP/MEP pathway for isoprenoid precursor biosynthesis.</text>
</comment>
<comment type="catalytic activity">
    <reaction evidence="1">
        <text>isopentenyl diphosphate + 2 oxidized [2Fe-2S]-[ferredoxin] + H2O = (2E)-4-hydroxy-3-methylbut-2-enyl diphosphate + 2 reduced [2Fe-2S]-[ferredoxin] + 2 H(+)</text>
        <dbReference type="Rhea" id="RHEA:24488"/>
        <dbReference type="Rhea" id="RHEA-COMP:10000"/>
        <dbReference type="Rhea" id="RHEA-COMP:10001"/>
        <dbReference type="ChEBI" id="CHEBI:15377"/>
        <dbReference type="ChEBI" id="CHEBI:15378"/>
        <dbReference type="ChEBI" id="CHEBI:33737"/>
        <dbReference type="ChEBI" id="CHEBI:33738"/>
        <dbReference type="ChEBI" id="CHEBI:128753"/>
        <dbReference type="ChEBI" id="CHEBI:128769"/>
        <dbReference type="EC" id="1.17.7.4"/>
    </reaction>
</comment>
<comment type="catalytic activity">
    <reaction evidence="1">
        <text>dimethylallyl diphosphate + 2 oxidized [2Fe-2S]-[ferredoxin] + H2O = (2E)-4-hydroxy-3-methylbut-2-enyl diphosphate + 2 reduced [2Fe-2S]-[ferredoxin] + 2 H(+)</text>
        <dbReference type="Rhea" id="RHEA:24825"/>
        <dbReference type="Rhea" id="RHEA-COMP:10000"/>
        <dbReference type="Rhea" id="RHEA-COMP:10001"/>
        <dbReference type="ChEBI" id="CHEBI:15377"/>
        <dbReference type="ChEBI" id="CHEBI:15378"/>
        <dbReference type="ChEBI" id="CHEBI:33737"/>
        <dbReference type="ChEBI" id="CHEBI:33738"/>
        <dbReference type="ChEBI" id="CHEBI:57623"/>
        <dbReference type="ChEBI" id="CHEBI:128753"/>
        <dbReference type="EC" id="1.17.7.4"/>
    </reaction>
</comment>
<comment type="cofactor">
    <cofactor evidence="1">
        <name>[4Fe-4S] cluster</name>
        <dbReference type="ChEBI" id="CHEBI:49883"/>
    </cofactor>
    <text evidence="1">Binds 1 [4Fe-4S] cluster per subunit.</text>
</comment>
<comment type="pathway">
    <text evidence="1">Isoprenoid biosynthesis; dimethylallyl diphosphate biosynthesis; dimethylallyl diphosphate from (2E)-4-hydroxy-3-methylbutenyl diphosphate: step 1/1.</text>
</comment>
<comment type="pathway">
    <text evidence="1">Isoprenoid biosynthesis; isopentenyl diphosphate biosynthesis via DXP pathway; isopentenyl diphosphate from 1-deoxy-D-xylulose 5-phosphate: step 6/6.</text>
</comment>
<comment type="similarity">
    <text evidence="1">Belongs to the IspH family.</text>
</comment>
<evidence type="ECO:0000255" key="1">
    <source>
        <dbReference type="HAMAP-Rule" id="MF_00191"/>
    </source>
</evidence>
<gene>
    <name evidence="1" type="primary">ispH</name>
    <name type="ordered locus">Cyan7425_2354</name>
</gene>
<keyword id="KW-0004">4Fe-4S</keyword>
<keyword id="KW-0408">Iron</keyword>
<keyword id="KW-0411">Iron-sulfur</keyword>
<keyword id="KW-0414">Isoprene biosynthesis</keyword>
<keyword id="KW-0479">Metal-binding</keyword>
<keyword id="KW-0560">Oxidoreductase</keyword>
<feature type="chain" id="PRO_1000124281" description="4-hydroxy-3-methylbut-2-enyl diphosphate reductase">
    <location>
        <begin position="1"/>
        <end position="405"/>
    </location>
</feature>
<feature type="active site" description="Proton donor" evidence="1">
    <location>
        <position position="188"/>
    </location>
</feature>
<feature type="binding site" evidence="1">
    <location>
        <position position="66"/>
    </location>
    <ligand>
        <name>[4Fe-4S] cluster</name>
        <dbReference type="ChEBI" id="CHEBI:49883"/>
    </ligand>
</feature>
<feature type="binding site" evidence="1">
    <location>
        <position position="96"/>
    </location>
    <ligand>
        <name>(2E)-4-hydroxy-3-methylbut-2-enyl diphosphate</name>
        <dbReference type="ChEBI" id="CHEBI:128753"/>
    </ligand>
</feature>
<feature type="binding site" evidence="1">
    <location>
        <position position="96"/>
    </location>
    <ligand>
        <name>dimethylallyl diphosphate</name>
        <dbReference type="ChEBI" id="CHEBI:57623"/>
    </ligand>
</feature>
<feature type="binding site" evidence="1">
    <location>
        <position position="96"/>
    </location>
    <ligand>
        <name>isopentenyl diphosphate</name>
        <dbReference type="ChEBI" id="CHEBI:128769"/>
    </ligand>
</feature>
<feature type="binding site" evidence="1">
    <location>
        <position position="158"/>
    </location>
    <ligand>
        <name>[4Fe-4S] cluster</name>
        <dbReference type="ChEBI" id="CHEBI:49883"/>
    </ligand>
</feature>
<feature type="binding site" evidence="1">
    <location>
        <position position="186"/>
    </location>
    <ligand>
        <name>(2E)-4-hydroxy-3-methylbut-2-enyl diphosphate</name>
        <dbReference type="ChEBI" id="CHEBI:128753"/>
    </ligand>
</feature>
<feature type="binding site" evidence="1">
    <location>
        <position position="186"/>
    </location>
    <ligand>
        <name>dimethylallyl diphosphate</name>
        <dbReference type="ChEBI" id="CHEBI:57623"/>
    </ligand>
</feature>
<feature type="binding site" evidence="1">
    <location>
        <position position="186"/>
    </location>
    <ligand>
        <name>isopentenyl diphosphate</name>
        <dbReference type="ChEBI" id="CHEBI:128769"/>
    </ligand>
</feature>
<feature type="binding site" evidence="1">
    <location>
        <position position="251"/>
    </location>
    <ligand>
        <name>(2E)-4-hydroxy-3-methylbut-2-enyl diphosphate</name>
        <dbReference type="ChEBI" id="CHEBI:128753"/>
    </ligand>
</feature>
<feature type="binding site" evidence="1">
    <location>
        <position position="289"/>
    </location>
    <ligand>
        <name>[4Fe-4S] cluster</name>
        <dbReference type="ChEBI" id="CHEBI:49883"/>
    </ligand>
</feature>
<feature type="binding site" evidence="1">
    <location>
        <position position="318"/>
    </location>
    <ligand>
        <name>(2E)-4-hydroxy-3-methylbut-2-enyl diphosphate</name>
        <dbReference type="ChEBI" id="CHEBI:128753"/>
    </ligand>
</feature>
<feature type="binding site" evidence="1">
    <location>
        <position position="318"/>
    </location>
    <ligand>
        <name>dimethylallyl diphosphate</name>
        <dbReference type="ChEBI" id="CHEBI:57623"/>
    </ligand>
</feature>
<feature type="binding site" evidence="1">
    <location>
        <position position="318"/>
    </location>
    <ligand>
        <name>isopentenyl diphosphate</name>
        <dbReference type="ChEBI" id="CHEBI:128769"/>
    </ligand>
</feature>
<feature type="binding site" evidence="1">
    <location>
        <position position="319"/>
    </location>
    <ligand>
        <name>(2E)-4-hydroxy-3-methylbut-2-enyl diphosphate</name>
        <dbReference type="ChEBI" id="CHEBI:128753"/>
    </ligand>
</feature>
<feature type="binding site" evidence="1">
    <location>
        <position position="319"/>
    </location>
    <ligand>
        <name>dimethylallyl diphosphate</name>
        <dbReference type="ChEBI" id="CHEBI:57623"/>
    </ligand>
</feature>
<feature type="binding site" evidence="1">
    <location>
        <position position="319"/>
    </location>
    <ligand>
        <name>isopentenyl diphosphate</name>
        <dbReference type="ChEBI" id="CHEBI:128769"/>
    </ligand>
</feature>
<feature type="binding site" evidence="1">
    <location>
        <position position="320"/>
    </location>
    <ligand>
        <name>(2E)-4-hydroxy-3-methylbut-2-enyl diphosphate</name>
        <dbReference type="ChEBI" id="CHEBI:128753"/>
    </ligand>
</feature>
<feature type="binding site" evidence="1">
    <location>
        <position position="320"/>
    </location>
    <ligand>
        <name>dimethylallyl diphosphate</name>
        <dbReference type="ChEBI" id="CHEBI:57623"/>
    </ligand>
</feature>
<feature type="binding site" evidence="1">
    <location>
        <position position="320"/>
    </location>
    <ligand>
        <name>isopentenyl diphosphate</name>
        <dbReference type="ChEBI" id="CHEBI:128769"/>
    </ligand>
</feature>
<feature type="binding site" evidence="1">
    <location>
        <position position="380"/>
    </location>
    <ligand>
        <name>(2E)-4-hydroxy-3-methylbut-2-enyl diphosphate</name>
        <dbReference type="ChEBI" id="CHEBI:128753"/>
    </ligand>
</feature>
<feature type="binding site" evidence="1">
    <location>
        <position position="380"/>
    </location>
    <ligand>
        <name>dimethylallyl diphosphate</name>
        <dbReference type="ChEBI" id="CHEBI:57623"/>
    </ligand>
</feature>
<feature type="binding site" evidence="1">
    <location>
        <position position="380"/>
    </location>
    <ligand>
        <name>isopentenyl diphosphate</name>
        <dbReference type="ChEBI" id="CHEBI:128769"/>
    </ligand>
</feature>
<name>ISPH_CYAP4</name>
<reference key="1">
    <citation type="journal article" date="2011" name="MBio">
        <title>Novel metabolic attributes of the genus Cyanothece, comprising a group of unicellular nitrogen-fixing Cyanobacteria.</title>
        <authorList>
            <person name="Bandyopadhyay A."/>
            <person name="Elvitigala T."/>
            <person name="Welsh E."/>
            <person name="Stockel J."/>
            <person name="Liberton M."/>
            <person name="Min H."/>
            <person name="Sherman L.A."/>
            <person name="Pakrasi H.B."/>
        </authorList>
    </citation>
    <scope>NUCLEOTIDE SEQUENCE [LARGE SCALE GENOMIC DNA]</scope>
    <source>
        <strain>PCC 7425 / ATCC 29141</strain>
    </source>
</reference>
<proteinExistence type="inferred from homology"/>
<accession>B8HWD3</accession>
<sequence>MDTKAFKRSLHSSNQYHRKGFGHEAEVTEMLRFEYQSSLIQQIRENGNRFQRGEVTIQLAEAFGFCWGVERAVALAYETRQHFPTERIWITNEIIHNPSVNQNLREMQVEFIPVDEQGQKDFSVVAGEDVVILPAFGASVQEMQLLNDKGCKIMDTTCPWVSKVWNSVEKHKKGSYTSIIHGKYQHEETIATSSYAATYLIVLDLKEAEYVCNYILNGGDREEFLHKFRHAYSPDFDPDRDLVRVGIANQTTMLKGETEQIGKLFERTLMRKYGPDQINQHFLSFNTICDATQERQDAMFKLVEYPLDLMVVIGGFNSSNTTHLQEISIEREIPSYHIDSADRIGPGNRVEHKPLHRPLEIKENWLPEGPIVVGITSGASTPDKVVSDVLEKIFALKSTSPALIP</sequence>